<comment type="function">
    <text evidence="1">Could be involved in insertion of integral membrane proteins into the membrane.</text>
</comment>
<comment type="subcellular location">
    <subcellularLocation>
        <location evidence="1">Cell membrane</location>
        <topology evidence="1">Peripheral membrane protein</topology>
        <orientation evidence="1">Cytoplasmic side</orientation>
    </subcellularLocation>
</comment>
<comment type="similarity">
    <text evidence="1">Belongs to the UPF0161 family.</text>
</comment>
<feature type="chain" id="PRO_0000171816" description="Putative membrane protein insertion efficiency factor">
    <location>
        <begin position="1"/>
        <end position="99"/>
    </location>
</feature>
<proteinExistence type="inferred from homology"/>
<accession>Q8FSU9</accession>
<protein>
    <recommendedName>
        <fullName evidence="1">Putative membrane protein insertion efficiency factor</fullName>
    </recommendedName>
</protein>
<dbReference type="EMBL" id="BA000035">
    <property type="protein sequence ID" value="BAC19755.1"/>
    <property type="molecule type" value="Genomic_DNA"/>
</dbReference>
<dbReference type="RefSeq" id="WP_011076158.1">
    <property type="nucleotide sequence ID" value="NC_004369.1"/>
</dbReference>
<dbReference type="STRING" id="196164.gene:10743395"/>
<dbReference type="KEGG" id="cef:CE2945"/>
<dbReference type="eggNOG" id="COG0759">
    <property type="taxonomic scope" value="Bacteria"/>
</dbReference>
<dbReference type="HOGENOM" id="CLU_144811_5_2_11"/>
<dbReference type="OrthoDB" id="9801753at2"/>
<dbReference type="Proteomes" id="UP000001409">
    <property type="component" value="Chromosome"/>
</dbReference>
<dbReference type="GO" id="GO:0005886">
    <property type="term" value="C:plasma membrane"/>
    <property type="evidence" value="ECO:0007669"/>
    <property type="project" value="UniProtKB-SubCell"/>
</dbReference>
<dbReference type="HAMAP" id="MF_00386">
    <property type="entry name" value="UPF0161_YidD"/>
    <property type="match status" value="1"/>
</dbReference>
<dbReference type="InterPro" id="IPR002696">
    <property type="entry name" value="Membr_insert_effic_factor_YidD"/>
</dbReference>
<dbReference type="NCBIfam" id="TIGR00278">
    <property type="entry name" value="membrane protein insertion efficiency factor YidD"/>
    <property type="match status" value="1"/>
</dbReference>
<dbReference type="PANTHER" id="PTHR33383">
    <property type="entry name" value="MEMBRANE PROTEIN INSERTION EFFICIENCY FACTOR-RELATED"/>
    <property type="match status" value="1"/>
</dbReference>
<dbReference type="PANTHER" id="PTHR33383:SF1">
    <property type="entry name" value="MEMBRANE PROTEIN INSERTION EFFICIENCY FACTOR-RELATED"/>
    <property type="match status" value="1"/>
</dbReference>
<dbReference type="Pfam" id="PF01809">
    <property type="entry name" value="YidD"/>
    <property type="match status" value="1"/>
</dbReference>
<dbReference type="SMART" id="SM01234">
    <property type="entry name" value="Haemolytic"/>
    <property type="match status" value="1"/>
</dbReference>
<organism>
    <name type="scientific">Corynebacterium efficiens (strain DSM 44549 / YS-314 / AJ 12310 / JCM 11189 / NBRC 100395)</name>
    <dbReference type="NCBI Taxonomy" id="196164"/>
    <lineage>
        <taxon>Bacteria</taxon>
        <taxon>Bacillati</taxon>
        <taxon>Actinomycetota</taxon>
        <taxon>Actinomycetes</taxon>
        <taxon>Mycobacteriales</taxon>
        <taxon>Corynebacteriaceae</taxon>
        <taxon>Corynebacterium</taxon>
    </lineage>
</organism>
<keyword id="KW-1003">Cell membrane</keyword>
<keyword id="KW-0472">Membrane</keyword>
<keyword id="KW-1185">Reference proteome</keyword>
<reference key="1">
    <citation type="journal article" date="2003" name="Genome Res.">
        <title>Comparative complete genome sequence analysis of the amino acid replacements responsible for the thermostability of Corynebacterium efficiens.</title>
        <authorList>
            <person name="Nishio Y."/>
            <person name="Nakamura Y."/>
            <person name="Kawarabayasi Y."/>
            <person name="Usuda Y."/>
            <person name="Kimura E."/>
            <person name="Sugimoto S."/>
            <person name="Matsui K."/>
            <person name="Yamagishi A."/>
            <person name="Kikuchi H."/>
            <person name="Ikeo K."/>
            <person name="Gojobori T."/>
        </authorList>
    </citation>
    <scope>NUCLEOTIDE SEQUENCE [LARGE SCALE GENOMIC DNA]</scope>
    <source>
        <strain>DSM 44549 / YS-314 / AJ 12310 / JCM 11189 / NBRC 100395</strain>
    </source>
</reference>
<sequence>MCEPISDDPQVIPQPKGPAAKALAGAVRFYQKYLSGLKMGSTCRFDPVCSTYALKSVSVHGAVKGTVLAAVRLAKCGPWHPGGFDPVPNPGYWSTETVR</sequence>
<gene>
    <name type="ordered locus">CE2945</name>
</gene>
<evidence type="ECO:0000255" key="1">
    <source>
        <dbReference type="HAMAP-Rule" id="MF_00386"/>
    </source>
</evidence>
<name>YIDD_COREF</name>